<name>S39A7_CANLF</name>
<protein>
    <recommendedName>
        <fullName>Zinc transporter SLC39A7</fullName>
    </recommendedName>
    <alternativeName>
        <fullName>Histidine-rich membrane protein Ke4</fullName>
    </alternativeName>
    <alternativeName>
        <fullName>Solute carrier family 39 member 7</fullName>
    </alternativeName>
    <alternativeName>
        <fullName>Zrt-, Irt-like protein 7</fullName>
        <shortName>ZIP7</shortName>
    </alternativeName>
</protein>
<sequence length="469" mass="49916">MARGLGAPHWVAVGLLTWAALGLLVAGHGGHGDLHEDLHEDFHGHSHRRSHEDFHHGHSYAHGHGHTHESIWHGHTHGHEHGHAHEDLHHGHSHGQSHESLYHRGHGHDHEHSHGGYGESGAPGIKQDLDTVTLWAYALGATVLISAAPFFVLFLIPVESNSPRHRSLLQILLSFASGGLLGDAFLHLIPHALEPHSHHPLEQPGHGHSHSGQGPILSVGLWVLSGIVAFLVVEKFVRHVKGGHGHSHGHGHTHGHTQGSHGHGTQKYPSKEKQSSEEEEKEANGSRKRKGGSTRLKDGPLRPQNSEEEKTGSDLRVSGYLNLAADLAHNFTDGLAIGASFRGGRGLGILTTMTVLLHEVPHEVGDFAILVQSGCSKKQAMRLQLLTAIGALAGTACALLTEGGAVGSEVAGGTGSGWVLPFTAGGFIYVATVSVLPELLREASPLQSLLEVLGLLGGVVMMVLIAHLE</sequence>
<keyword id="KW-0256">Endoplasmic reticulum</keyword>
<keyword id="KW-0333">Golgi apparatus</keyword>
<keyword id="KW-0406">Ion transport</keyword>
<keyword id="KW-0472">Membrane</keyword>
<keyword id="KW-0488">Methylation</keyword>
<keyword id="KW-0597">Phosphoprotein</keyword>
<keyword id="KW-1185">Reference proteome</keyword>
<keyword id="KW-0812">Transmembrane</keyword>
<keyword id="KW-1133">Transmembrane helix</keyword>
<keyword id="KW-0813">Transport</keyword>
<keyword id="KW-0862">Zinc</keyword>
<keyword id="KW-0864">Zinc transport</keyword>
<dbReference type="EMBL" id="AJ630366">
    <property type="protein sequence ID" value="CAI11432.1"/>
    <property type="molecule type" value="Genomic_DNA"/>
</dbReference>
<dbReference type="RefSeq" id="NP_001041565.1">
    <property type="nucleotide sequence ID" value="NM_001048100.1"/>
</dbReference>
<dbReference type="SMR" id="Q5TJF6"/>
<dbReference type="FunCoup" id="Q5TJF6">
    <property type="interactions" value="1478"/>
</dbReference>
<dbReference type="STRING" id="9615.ENSCAFP00000065513"/>
<dbReference type="PaxDb" id="9612-ENSCAFP00000001312"/>
<dbReference type="GeneID" id="481736"/>
<dbReference type="KEGG" id="cfa:481736"/>
<dbReference type="CTD" id="7922"/>
<dbReference type="eggNOG" id="KOG2693">
    <property type="taxonomic scope" value="Eukaryota"/>
</dbReference>
<dbReference type="InParanoid" id="Q5TJF6"/>
<dbReference type="OrthoDB" id="200954at2759"/>
<dbReference type="Proteomes" id="UP000002254">
    <property type="component" value="Unplaced"/>
</dbReference>
<dbReference type="Proteomes" id="UP000694429">
    <property type="component" value="Unplaced"/>
</dbReference>
<dbReference type="Proteomes" id="UP000694542">
    <property type="component" value="Unplaced"/>
</dbReference>
<dbReference type="Proteomes" id="UP000805418">
    <property type="component" value="Unplaced"/>
</dbReference>
<dbReference type="GO" id="GO:0005789">
    <property type="term" value="C:endoplasmic reticulum membrane"/>
    <property type="evidence" value="ECO:0007669"/>
    <property type="project" value="UniProtKB-SubCell"/>
</dbReference>
<dbReference type="GO" id="GO:0005794">
    <property type="term" value="C:Golgi apparatus"/>
    <property type="evidence" value="ECO:0007669"/>
    <property type="project" value="UniProtKB-SubCell"/>
</dbReference>
<dbReference type="GO" id="GO:0005385">
    <property type="term" value="F:zinc ion transmembrane transporter activity"/>
    <property type="evidence" value="ECO:0000250"/>
    <property type="project" value="UniProtKB"/>
</dbReference>
<dbReference type="GO" id="GO:0030183">
    <property type="term" value="P:B cell differentiation"/>
    <property type="evidence" value="ECO:0000250"/>
    <property type="project" value="UniProtKB"/>
</dbReference>
<dbReference type="GO" id="GO:0006882">
    <property type="term" value="P:intracellular zinc ion homeostasis"/>
    <property type="evidence" value="ECO:0000250"/>
    <property type="project" value="UniProtKB"/>
</dbReference>
<dbReference type="GO" id="GO:0110075">
    <property type="term" value="P:regulation of ferroptosis"/>
    <property type="evidence" value="ECO:0000250"/>
    <property type="project" value="UniProtKB"/>
</dbReference>
<dbReference type="GO" id="GO:0098773">
    <property type="term" value="P:skin epidermis development"/>
    <property type="evidence" value="ECO:0000250"/>
    <property type="project" value="UniProtKB"/>
</dbReference>
<dbReference type="GO" id="GO:0071577">
    <property type="term" value="P:zinc ion transmembrane transport"/>
    <property type="evidence" value="ECO:0000318"/>
    <property type="project" value="GO_Central"/>
</dbReference>
<dbReference type="InterPro" id="IPR003689">
    <property type="entry name" value="ZIP"/>
</dbReference>
<dbReference type="PANTHER" id="PTHR16950:SF25">
    <property type="entry name" value="ZINC TRANSPORTER SLC39A7"/>
    <property type="match status" value="1"/>
</dbReference>
<dbReference type="PANTHER" id="PTHR16950">
    <property type="entry name" value="ZINC TRANSPORTER SLC39A7 HISTIDINE-RICH MEMBRANE PROTEIN KE4"/>
    <property type="match status" value="1"/>
</dbReference>
<dbReference type="Pfam" id="PF02535">
    <property type="entry name" value="Zip"/>
    <property type="match status" value="1"/>
</dbReference>
<organism>
    <name type="scientific">Canis lupus familiaris</name>
    <name type="common">Dog</name>
    <name type="synonym">Canis familiaris</name>
    <dbReference type="NCBI Taxonomy" id="9615"/>
    <lineage>
        <taxon>Eukaryota</taxon>
        <taxon>Metazoa</taxon>
        <taxon>Chordata</taxon>
        <taxon>Craniata</taxon>
        <taxon>Vertebrata</taxon>
        <taxon>Euteleostomi</taxon>
        <taxon>Mammalia</taxon>
        <taxon>Eutheria</taxon>
        <taxon>Laurasiatheria</taxon>
        <taxon>Carnivora</taxon>
        <taxon>Caniformia</taxon>
        <taxon>Canidae</taxon>
        <taxon>Canis</taxon>
    </lineage>
</organism>
<accession>Q5TJF6</accession>
<comment type="function">
    <text evidence="1 2">Transports Zn(2+) from the endoplasmic reticulum (ER)/Golgi apparatus to the cytosol, playing an essential role in the regulation of cytosolic zinc levels. Acts as a gatekeeper of zinc release from intracellular stores, requiring post-translational activation by phosphorylation, resulting in activation of multiple downstream pathways leading to cell growth and proliferation. Has an essential role in B cell development and is required for proper B cell receptor signaling (By similarity). Plays an important role in maintaining intestinal epithelial homeostasis and skin dermis development by regulating ER function. Controls cell signaling pathways involved in glucose metabolism in skeletal muscle (By similarity). Has a protective role against ER stress in different biological contexts. Mediates Zn(2+)-induced ferroptosis (By similarity).</text>
</comment>
<comment type="catalytic activity">
    <reaction evidence="2">
        <text>Zn(2+)(in) = Zn(2+)(out)</text>
        <dbReference type="Rhea" id="RHEA:29351"/>
        <dbReference type="ChEBI" id="CHEBI:29105"/>
    </reaction>
</comment>
<comment type="subunit">
    <text evidence="2">Homodimer.</text>
</comment>
<comment type="subcellular location">
    <subcellularLocation>
        <location evidence="2">Endoplasmic reticulum membrane</location>
        <topology evidence="3">Multi-pass membrane protein</topology>
    </subcellularLocation>
    <subcellularLocation>
        <location evidence="2">Golgi apparatus</location>
        <location evidence="2">cis-Golgi network membrane</location>
        <topology evidence="3">Multi-pass membrane protein</topology>
    </subcellularLocation>
</comment>
<comment type="PTM">
    <text evidence="2">Methylation at some His residue by METTL9 leads to reduced zinc-binding.</text>
</comment>
<comment type="PTM">
    <text evidence="2">Rapidly phosphorylated by CK2 following Zn(2+) treatment. This phosphorylation is required for efficient cytosolic Zn(2+) release.</text>
</comment>
<comment type="similarity">
    <text evidence="3">Belongs to the ZIP transporter (TC 2.A.5) family. KE4/Catsup subfamily.</text>
</comment>
<gene>
    <name evidence="6" type="primary">SLC39A7</name>
</gene>
<feature type="chain" id="PRO_0000213687" description="Zinc transporter SLC39A7">
    <location>
        <begin position="1"/>
        <end position="469"/>
    </location>
</feature>
<feature type="transmembrane region" description="Helical" evidence="3">
    <location>
        <begin position="5"/>
        <end position="25"/>
    </location>
</feature>
<feature type="transmembrane region" description="Helical" evidence="3">
    <location>
        <begin position="138"/>
        <end position="158"/>
    </location>
</feature>
<feature type="transmembrane region" description="Helical" evidence="3">
    <location>
        <begin position="169"/>
        <end position="189"/>
    </location>
</feature>
<feature type="transmembrane region" description="Helical" evidence="3">
    <location>
        <begin position="214"/>
        <end position="234"/>
    </location>
</feature>
<feature type="transmembrane region" description="Helical" evidence="3">
    <location>
        <begin position="386"/>
        <end position="406"/>
    </location>
</feature>
<feature type="transmembrane region" description="Helical" evidence="3">
    <location>
        <begin position="417"/>
        <end position="437"/>
    </location>
</feature>
<feature type="transmembrane region" description="Helical" evidence="3">
    <location>
        <begin position="448"/>
        <end position="468"/>
    </location>
</feature>
<feature type="region of interest" description="Disordered" evidence="4">
    <location>
        <begin position="43"/>
        <end position="122"/>
    </location>
</feature>
<feature type="region of interest" description="Disordered" evidence="4">
    <location>
        <begin position="242"/>
        <end position="313"/>
    </location>
</feature>
<feature type="compositionally biased region" description="Basic and acidic residues" evidence="4">
    <location>
        <begin position="43"/>
        <end position="56"/>
    </location>
</feature>
<feature type="compositionally biased region" description="Basic and acidic residues" evidence="4">
    <location>
        <begin position="66"/>
        <end position="114"/>
    </location>
</feature>
<feature type="compositionally biased region" description="Basic residues" evidence="4">
    <location>
        <begin position="242"/>
        <end position="255"/>
    </location>
</feature>
<feature type="compositionally biased region" description="Low complexity" evidence="4">
    <location>
        <begin position="256"/>
        <end position="266"/>
    </location>
</feature>
<feature type="compositionally biased region" description="Basic and acidic residues" evidence="4">
    <location>
        <begin position="295"/>
        <end position="313"/>
    </location>
</feature>
<feature type="modified residue" description="Pros-methylhistidine" evidence="1">
    <location>
        <position position="66"/>
    </location>
</feature>
<feature type="modified residue" description="Phosphoserine" evidence="2">
    <location>
        <position position="275"/>
    </location>
</feature>
<feature type="modified residue" description="Phosphoserine" evidence="2">
    <location>
        <position position="276"/>
    </location>
</feature>
<reference evidence="5 6" key="1">
    <citation type="journal article" date="2005" name="Genomics">
        <title>Genomic sequence of the class II region of the canine MHC: comparison with the MHC of other mammalian species.</title>
        <authorList>
            <person name="Debenham S.L."/>
            <person name="Hart E.A."/>
            <person name="Ashurst J.L."/>
            <person name="Howe K.L."/>
            <person name="Quail M.A."/>
            <person name="Ollier W.E.R."/>
            <person name="Binns M.M."/>
        </authorList>
    </citation>
    <scope>NUCLEOTIDE SEQUENCE [LARGE SCALE GENOMIC DNA]</scope>
    <source>
        <strain>Doberman pinscher</strain>
    </source>
</reference>
<evidence type="ECO:0000250" key="1">
    <source>
        <dbReference type="UniProtKB" id="Q31125"/>
    </source>
</evidence>
<evidence type="ECO:0000250" key="2">
    <source>
        <dbReference type="UniProtKB" id="Q92504"/>
    </source>
</evidence>
<evidence type="ECO:0000255" key="3"/>
<evidence type="ECO:0000256" key="4">
    <source>
        <dbReference type="SAM" id="MobiDB-lite"/>
    </source>
</evidence>
<evidence type="ECO:0000305" key="5"/>
<evidence type="ECO:0000312" key="6">
    <source>
        <dbReference type="EMBL" id="CAI11432.1"/>
    </source>
</evidence>
<proteinExistence type="inferred from homology"/>